<comment type="function">
    <text>Tubulin is the major constituent of microtubules, a cylinder consisting of laterally associated linear protofilaments composed of alpha- and beta-tubulin heterodimers. Microtubules grow by the addition of GTP-tubulin dimers to the microtubule end, where a stabilizing cap forms. Below the cap, tubulin dimers are in GDP-bound state, owing to GTPase activity of alpha-tubulin.</text>
</comment>
<comment type="cofactor">
    <cofactor evidence="1">
        <name>Mg(2+)</name>
        <dbReference type="ChEBI" id="CHEBI:18420"/>
    </cofactor>
</comment>
<comment type="subunit">
    <text>Dimer of alpha and beta chains. A typical microtubule is a hollow water-filled tube with an outer diameter of 25 nm and an inner diameter of 15 nM. Alpha-beta heterodimers associate head-to-tail to form protofilaments running lengthwise along the microtubule wall with the beta-tubulin subunit facing the microtubule plus end conferring a structural polarity. Microtubules usually have 13 protofilaments but different protofilament numbers can be found in some organisms and specialized cells.</text>
</comment>
<comment type="subcellular location">
    <subcellularLocation>
        <location>Cytoplasm</location>
        <location>Cytoskeleton</location>
    </subcellularLocation>
</comment>
<comment type="similarity">
    <text evidence="4">Belongs to the tubulin family.</text>
</comment>
<evidence type="ECO:0000250" key="1">
    <source>
        <dbReference type="UniProtKB" id="P68363"/>
    </source>
</evidence>
<evidence type="ECO:0000250" key="2">
    <source>
        <dbReference type="UniProtKB" id="Q13509"/>
    </source>
</evidence>
<evidence type="ECO:0000256" key="3">
    <source>
        <dbReference type="SAM" id="MobiDB-lite"/>
    </source>
</evidence>
<evidence type="ECO:0000305" key="4"/>
<gene>
    <name type="primary">TUB1</name>
</gene>
<name>TBB_ZYMTR</name>
<dbReference type="EMBL" id="AY547264">
    <property type="protein sequence ID" value="AAS55060.1"/>
    <property type="molecule type" value="Genomic_DNA"/>
</dbReference>
<dbReference type="SMR" id="Q6QDC9"/>
<dbReference type="VEuPathDB" id="FungiDB:ZT3D1_G2028"/>
<dbReference type="VEuPathDB" id="FungiDB:ZTRI_1.1986"/>
<dbReference type="GO" id="GO:0005737">
    <property type="term" value="C:cytoplasm"/>
    <property type="evidence" value="ECO:0007669"/>
    <property type="project" value="UniProtKB-KW"/>
</dbReference>
<dbReference type="GO" id="GO:0005874">
    <property type="term" value="C:microtubule"/>
    <property type="evidence" value="ECO:0007669"/>
    <property type="project" value="UniProtKB-KW"/>
</dbReference>
<dbReference type="GO" id="GO:0005525">
    <property type="term" value="F:GTP binding"/>
    <property type="evidence" value="ECO:0007669"/>
    <property type="project" value="UniProtKB-KW"/>
</dbReference>
<dbReference type="GO" id="GO:0003924">
    <property type="term" value="F:GTPase activity"/>
    <property type="evidence" value="ECO:0007669"/>
    <property type="project" value="InterPro"/>
</dbReference>
<dbReference type="GO" id="GO:0046872">
    <property type="term" value="F:metal ion binding"/>
    <property type="evidence" value="ECO:0007669"/>
    <property type="project" value="UniProtKB-KW"/>
</dbReference>
<dbReference type="GO" id="GO:0005200">
    <property type="term" value="F:structural constituent of cytoskeleton"/>
    <property type="evidence" value="ECO:0007669"/>
    <property type="project" value="InterPro"/>
</dbReference>
<dbReference type="GO" id="GO:0007017">
    <property type="term" value="P:microtubule-based process"/>
    <property type="evidence" value="ECO:0007669"/>
    <property type="project" value="InterPro"/>
</dbReference>
<dbReference type="CDD" id="cd02187">
    <property type="entry name" value="beta_tubulin"/>
    <property type="match status" value="1"/>
</dbReference>
<dbReference type="FunFam" id="1.10.287.600:FF:000003">
    <property type="entry name" value="Tubulin beta chain"/>
    <property type="match status" value="1"/>
</dbReference>
<dbReference type="FunFam" id="3.30.1330.20:FF:000002">
    <property type="entry name" value="Tubulin beta chain"/>
    <property type="match status" value="1"/>
</dbReference>
<dbReference type="FunFam" id="3.40.50.1440:FF:000009">
    <property type="entry name" value="Tubulin beta chain"/>
    <property type="match status" value="1"/>
</dbReference>
<dbReference type="Gene3D" id="1.10.287.600">
    <property type="entry name" value="Helix hairpin bin"/>
    <property type="match status" value="1"/>
</dbReference>
<dbReference type="Gene3D" id="3.30.1330.20">
    <property type="entry name" value="Tubulin/FtsZ, C-terminal domain"/>
    <property type="match status" value="1"/>
</dbReference>
<dbReference type="Gene3D" id="3.40.50.1440">
    <property type="entry name" value="Tubulin/FtsZ, GTPase domain"/>
    <property type="match status" value="1"/>
</dbReference>
<dbReference type="InterPro" id="IPR013838">
    <property type="entry name" value="Beta-tubulin_BS"/>
</dbReference>
<dbReference type="InterPro" id="IPR002453">
    <property type="entry name" value="Beta_tubulin"/>
</dbReference>
<dbReference type="InterPro" id="IPR008280">
    <property type="entry name" value="Tub_FtsZ_C"/>
</dbReference>
<dbReference type="InterPro" id="IPR000217">
    <property type="entry name" value="Tubulin"/>
</dbReference>
<dbReference type="InterPro" id="IPR037103">
    <property type="entry name" value="Tubulin/FtsZ-like_C"/>
</dbReference>
<dbReference type="InterPro" id="IPR018316">
    <property type="entry name" value="Tubulin/FtsZ_2-layer-sand-dom"/>
</dbReference>
<dbReference type="InterPro" id="IPR036525">
    <property type="entry name" value="Tubulin/FtsZ_GTPase_sf"/>
</dbReference>
<dbReference type="InterPro" id="IPR023123">
    <property type="entry name" value="Tubulin_C"/>
</dbReference>
<dbReference type="InterPro" id="IPR017975">
    <property type="entry name" value="Tubulin_CS"/>
</dbReference>
<dbReference type="InterPro" id="IPR003008">
    <property type="entry name" value="Tubulin_FtsZ_GTPase"/>
</dbReference>
<dbReference type="PANTHER" id="PTHR11588">
    <property type="entry name" value="TUBULIN"/>
    <property type="match status" value="1"/>
</dbReference>
<dbReference type="Pfam" id="PF00091">
    <property type="entry name" value="Tubulin"/>
    <property type="match status" value="1"/>
</dbReference>
<dbReference type="Pfam" id="PF03953">
    <property type="entry name" value="Tubulin_C"/>
    <property type="match status" value="1"/>
</dbReference>
<dbReference type="PRINTS" id="PR01163">
    <property type="entry name" value="BETATUBULIN"/>
</dbReference>
<dbReference type="PRINTS" id="PR01161">
    <property type="entry name" value="TUBULIN"/>
</dbReference>
<dbReference type="SMART" id="SM00864">
    <property type="entry name" value="Tubulin"/>
    <property type="match status" value="1"/>
</dbReference>
<dbReference type="SMART" id="SM00865">
    <property type="entry name" value="Tubulin_C"/>
    <property type="match status" value="1"/>
</dbReference>
<dbReference type="SUPFAM" id="SSF55307">
    <property type="entry name" value="Tubulin C-terminal domain-like"/>
    <property type="match status" value="1"/>
</dbReference>
<dbReference type="SUPFAM" id="SSF52490">
    <property type="entry name" value="Tubulin nucleotide-binding domain-like"/>
    <property type="match status" value="1"/>
</dbReference>
<dbReference type="PROSITE" id="PS00227">
    <property type="entry name" value="TUBULIN"/>
    <property type="match status" value="1"/>
</dbReference>
<dbReference type="PROSITE" id="PS00228">
    <property type="entry name" value="TUBULIN_B_AUTOREG"/>
    <property type="match status" value="1"/>
</dbReference>
<reference key="1">
    <citation type="submission" date="2004-02" db="EMBL/GenBank/DDBJ databases">
        <title>Evolutionary studies of the Mycosphaerella graminicola beta-tubulin gene in relation to the introduction of MBC fungicides.</title>
        <authorList>
            <person name="Fraaije B.A."/>
            <person name="Cools H.J."/>
        </authorList>
    </citation>
    <scope>NUCLEOTIDE SEQUENCE [GENOMIC DNA]</scope>
</reference>
<protein>
    <recommendedName>
        <fullName>Tubulin beta chain</fullName>
    </recommendedName>
    <alternativeName>
        <fullName>Beta-tubulin</fullName>
    </alternativeName>
</protein>
<proteinExistence type="inferred from homology"/>
<sequence length="447" mass="49705">MREIVHLQTGQCGNQIGAAFWQTISGEHGLDGSGVYNGTSDLQLERMNVYFNEASGNKYVPRAVLVDLEPGTMDAVRAGPFGQLFRPDNFVFGQSGAGNNWAKGHYTEGAELVDQVLDVVRREAEGCDCLQGFQITHSLGGGTGAGMGTLLISKIREEFPDRMMATFSVMPSPKVSDTVVEPYNATLSVHQLVENSDATFCIDNEALYDICMRTLKLNNPSYGDLNHLVSAVMSGVTTCLRFPGQLNSDLRKLAVNMVPFPRLHFFMVGFAPLTSRGAHSFRAVTVPELTQQIFDPKNMMAASDFRNGRYLTCSAIYRGKVSMKEVEDQIRNVQNKNTAYFVEWIPNNVQTALCSIPPRGLKMSSTFVGNSTSIQELFKRVGDQFSAMFRRKAFLHWYTGEGMDEMEFTEAESNMNDLVSEYQQYQEASVSDAEEEYDEEAPLEGEE</sequence>
<accession>Q6QDC9</accession>
<feature type="chain" id="PRO_0000048420" description="Tubulin beta chain">
    <location>
        <begin position="1"/>
        <end position="447"/>
    </location>
</feature>
<feature type="region of interest" description="Disordered" evidence="3">
    <location>
        <begin position="424"/>
        <end position="447"/>
    </location>
</feature>
<feature type="compositionally biased region" description="Acidic residues" evidence="3">
    <location>
        <begin position="432"/>
        <end position="447"/>
    </location>
</feature>
<feature type="binding site" evidence="2">
    <location>
        <position position="11"/>
    </location>
    <ligand>
        <name>GTP</name>
        <dbReference type="ChEBI" id="CHEBI:37565"/>
    </ligand>
</feature>
<feature type="binding site" evidence="1">
    <location>
        <position position="69"/>
    </location>
    <ligand>
        <name>GTP</name>
        <dbReference type="ChEBI" id="CHEBI:37565"/>
    </ligand>
</feature>
<feature type="binding site" evidence="1">
    <location>
        <position position="69"/>
    </location>
    <ligand>
        <name>Mg(2+)</name>
        <dbReference type="ChEBI" id="CHEBI:18420"/>
    </ligand>
</feature>
<feature type="binding site" evidence="2">
    <location>
        <position position="138"/>
    </location>
    <ligand>
        <name>GTP</name>
        <dbReference type="ChEBI" id="CHEBI:37565"/>
    </ligand>
</feature>
<feature type="binding site" evidence="2">
    <location>
        <position position="142"/>
    </location>
    <ligand>
        <name>GTP</name>
        <dbReference type="ChEBI" id="CHEBI:37565"/>
    </ligand>
</feature>
<feature type="binding site" evidence="2">
    <location>
        <position position="143"/>
    </location>
    <ligand>
        <name>GTP</name>
        <dbReference type="ChEBI" id="CHEBI:37565"/>
    </ligand>
</feature>
<feature type="binding site" evidence="2">
    <location>
        <position position="144"/>
    </location>
    <ligand>
        <name>GTP</name>
        <dbReference type="ChEBI" id="CHEBI:37565"/>
    </ligand>
</feature>
<feature type="binding site" evidence="2">
    <location>
        <position position="204"/>
    </location>
    <ligand>
        <name>GTP</name>
        <dbReference type="ChEBI" id="CHEBI:37565"/>
    </ligand>
</feature>
<feature type="binding site" evidence="2">
    <location>
        <position position="226"/>
    </location>
    <ligand>
        <name>GTP</name>
        <dbReference type="ChEBI" id="CHEBI:37565"/>
    </ligand>
</feature>
<organism>
    <name type="scientific">Zymoseptoria tritici</name>
    <name type="common">Speckled leaf blotch fungus</name>
    <name type="synonym">Septoria tritici</name>
    <dbReference type="NCBI Taxonomy" id="1047171"/>
    <lineage>
        <taxon>Eukaryota</taxon>
        <taxon>Fungi</taxon>
        <taxon>Dikarya</taxon>
        <taxon>Ascomycota</taxon>
        <taxon>Pezizomycotina</taxon>
        <taxon>Dothideomycetes</taxon>
        <taxon>Dothideomycetidae</taxon>
        <taxon>Mycosphaerellales</taxon>
        <taxon>Mycosphaerellaceae</taxon>
        <taxon>Zymoseptoria</taxon>
    </lineage>
</organism>
<keyword id="KW-0963">Cytoplasm</keyword>
<keyword id="KW-0206">Cytoskeleton</keyword>
<keyword id="KW-0342">GTP-binding</keyword>
<keyword id="KW-0460">Magnesium</keyword>
<keyword id="KW-0479">Metal-binding</keyword>
<keyword id="KW-0493">Microtubule</keyword>
<keyword id="KW-0547">Nucleotide-binding</keyword>